<evidence type="ECO:0000255" key="1">
    <source>
        <dbReference type="HAMAP-Rule" id="MF_00480"/>
    </source>
</evidence>
<evidence type="ECO:0000305" key="2"/>
<dbReference type="EMBL" id="CP000514">
    <property type="protein sequence ID" value="ABM17812.1"/>
    <property type="molecule type" value="Genomic_DNA"/>
</dbReference>
<dbReference type="RefSeq" id="WP_011784243.1">
    <property type="nucleotide sequence ID" value="NC_008740.1"/>
</dbReference>
<dbReference type="SMR" id="A1TYJ3"/>
<dbReference type="STRING" id="351348.Maqu_0715"/>
<dbReference type="GeneID" id="94722526"/>
<dbReference type="KEGG" id="maq:Maqu_0715"/>
<dbReference type="eggNOG" id="COG0049">
    <property type="taxonomic scope" value="Bacteria"/>
</dbReference>
<dbReference type="HOGENOM" id="CLU_072226_1_1_6"/>
<dbReference type="OrthoDB" id="9807653at2"/>
<dbReference type="Proteomes" id="UP000000998">
    <property type="component" value="Chromosome"/>
</dbReference>
<dbReference type="GO" id="GO:0015935">
    <property type="term" value="C:small ribosomal subunit"/>
    <property type="evidence" value="ECO:0007669"/>
    <property type="project" value="InterPro"/>
</dbReference>
<dbReference type="GO" id="GO:0019843">
    <property type="term" value="F:rRNA binding"/>
    <property type="evidence" value="ECO:0007669"/>
    <property type="project" value="UniProtKB-UniRule"/>
</dbReference>
<dbReference type="GO" id="GO:0003735">
    <property type="term" value="F:structural constituent of ribosome"/>
    <property type="evidence" value="ECO:0007669"/>
    <property type="project" value="InterPro"/>
</dbReference>
<dbReference type="GO" id="GO:0000049">
    <property type="term" value="F:tRNA binding"/>
    <property type="evidence" value="ECO:0007669"/>
    <property type="project" value="UniProtKB-UniRule"/>
</dbReference>
<dbReference type="GO" id="GO:0006412">
    <property type="term" value="P:translation"/>
    <property type="evidence" value="ECO:0007669"/>
    <property type="project" value="UniProtKB-UniRule"/>
</dbReference>
<dbReference type="CDD" id="cd14869">
    <property type="entry name" value="uS7_Bacteria"/>
    <property type="match status" value="1"/>
</dbReference>
<dbReference type="FunFam" id="1.10.455.10:FF:000001">
    <property type="entry name" value="30S ribosomal protein S7"/>
    <property type="match status" value="1"/>
</dbReference>
<dbReference type="Gene3D" id="1.10.455.10">
    <property type="entry name" value="Ribosomal protein S7 domain"/>
    <property type="match status" value="1"/>
</dbReference>
<dbReference type="HAMAP" id="MF_00480_B">
    <property type="entry name" value="Ribosomal_uS7_B"/>
    <property type="match status" value="1"/>
</dbReference>
<dbReference type="InterPro" id="IPR000235">
    <property type="entry name" value="Ribosomal_uS7"/>
</dbReference>
<dbReference type="InterPro" id="IPR005717">
    <property type="entry name" value="Ribosomal_uS7_bac/org-type"/>
</dbReference>
<dbReference type="InterPro" id="IPR023798">
    <property type="entry name" value="Ribosomal_uS7_dom"/>
</dbReference>
<dbReference type="InterPro" id="IPR036823">
    <property type="entry name" value="Ribosomal_uS7_dom_sf"/>
</dbReference>
<dbReference type="NCBIfam" id="TIGR01029">
    <property type="entry name" value="rpsG_bact"/>
    <property type="match status" value="1"/>
</dbReference>
<dbReference type="PANTHER" id="PTHR11205">
    <property type="entry name" value="RIBOSOMAL PROTEIN S7"/>
    <property type="match status" value="1"/>
</dbReference>
<dbReference type="Pfam" id="PF00177">
    <property type="entry name" value="Ribosomal_S7"/>
    <property type="match status" value="1"/>
</dbReference>
<dbReference type="PIRSF" id="PIRSF002122">
    <property type="entry name" value="RPS7p_RPS7a_RPS5e_RPS7o"/>
    <property type="match status" value="1"/>
</dbReference>
<dbReference type="SUPFAM" id="SSF47973">
    <property type="entry name" value="Ribosomal protein S7"/>
    <property type="match status" value="1"/>
</dbReference>
<keyword id="KW-0687">Ribonucleoprotein</keyword>
<keyword id="KW-0689">Ribosomal protein</keyword>
<keyword id="KW-0694">RNA-binding</keyword>
<keyword id="KW-0699">rRNA-binding</keyword>
<keyword id="KW-0820">tRNA-binding</keyword>
<name>RS7_MARN8</name>
<protein>
    <recommendedName>
        <fullName evidence="1">Small ribosomal subunit protein uS7</fullName>
    </recommendedName>
    <alternativeName>
        <fullName evidence="2">30S ribosomal protein S7</fullName>
    </alternativeName>
</protein>
<comment type="function">
    <text evidence="1">One of the primary rRNA binding proteins, it binds directly to 16S rRNA where it nucleates assembly of the head domain of the 30S subunit. Is located at the subunit interface close to the decoding center, probably blocks exit of the E-site tRNA.</text>
</comment>
<comment type="subunit">
    <text evidence="1">Part of the 30S ribosomal subunit. Contacts proteins S9 and S11.</text>
</comment>
<comment type="similarity">
    <text evidence="1">Belongs to the universal ribosomal protein uS7 family.</text>
</comment>
<feature type="chain" id="PRO_1000014223" description="Small ribosomal subunit protein uS7">
    <location>
        <begin position="1"/>
        <end position="156"/>
    </location>
</feature>
<proteinExistence type="inferred from homology"/>
<gene>
    <name evidence="1" type="primary">rpsG</name>
    <name type="ordered locus">Maqu_0715</name>
</gene>
<accession>A1TYJ3</accession>
<reference key="1">
    <citation type="journal article" date="2011" name="Appl. Environ. Microbiol.">
        <title>Genomic potential of Marinobacter aquaeolei, a biogeochemical 'opportunitroph'.</title>
        <authorList>
            <person name="Singer E."/>
            <person name="Webb E.A."/>
            <person name="Nelson W.C."/>
            <person name="Heidelberg J.F."/>
            <person name="Ivanova N."/>
            <person name="Pati A."/>
            <person name="Edwards K.J."/>
        </authorList>
    </citation>
    <scope>NUCLEOTIDE SEQUENCE [LARGE SCALE GENOMIC DNA]</scope>
    <source>
        <strain>ATCC 700491 / DSM 11845 / VT8</strain>
    </source>
</reference>
<organism>
    <name type="scientific">Marinobacter nauticus (strain ATCC 700491 / DSM 11845 / VT8)</name>
    <name type="common">Marinobacter aquaeolei</name>
    <dbReference type="NCBI Taxonomy" id="351348"/>
    <lineage>
        <taxon>Bacteria</taxon>
        <taxon>Pseudomonadati</taxon>
        <taxon>Pseudomonadota</taxon>
        <taxon>Gammaproteobacteria</taxon>
        <taxon>Pseudomonadales</taxon>
        <taxon>Marinobacteraceae</taxon>
        <taxon>Marinobacter</taxon>
    </lineage>
</organism>
<sequence length="156" mass="17710">MPRRRVAAKREIIPDPKFGSARLAKFINHVMESGKKSVAERIVYGALDIVAEKSKEEPIEMFEKALENIQPMVEVKSRRVGGATYQVPVEVRPSRQNALAMRWLVEYSRKRGEKSMAQRLAGEILDAADSKGAAVKKREDVHRMAEANKAFSHFRF</sequence>